<gene>
    <name evidence="1" type="primary">panB</name>
    <name type="ordered locus">CTN_0926</name>
</gene>
<comment type="function">
    <text evidence="1">Catalyzes the reversible reaction in which hydroxymethyl group from 5,10-methylenetetrahydrofolate is transferred onto alpha-ketoisovalerate to form ketopantoate.</text>
</comment>
<comment type="catalytic activity">
    <reaction evidence="1">
        <text>3-methyl-2-oxobutanoate + (6R)-5,10-methylene-5,6,7,8-tetrahydrofolate + H2O = 2-dehydropantoate + (6S)-5,6,7,8-tetrahydrofolate</text>
        <dbReference type="Rhea" id="RHEA:11824"/>
        <dbReference type="ChEBI" id="CHEBI:11561"/>
        <dbReference type="ChEBI" id="CHEBI:11851"/>
        <dbReference type="ChEBI" id="CHEBI:15377"/>
        <dbReference type="ChEBI" id="CHEBI:15636"/>
        <dbReference type="ChEBI" id="CHEBI:57453"/>
        <dbReference type="EC" id="2.1.2.11"/>
    </reaction>
</comment>
<comment type="cofactor">
    <cofactor evidence="1">
        <name>Mg(2+)</name>
        <dbReference type="ChEBI" id="CHEBI:18420"/>
    </cofactor>
    <text evidence="1">Binds 1 Mg(2+) ion per subunit.</text>
</comment>
<comment type="pathway">
    <text evidence="1">Cofactor biosynthesis; (R)-pantothenate biosynthesis; (R)-pantoate from 3-methyl-2-oxobutanoate: step 1/2.</text>
</comment>
<comment type="subunit">
    <text evidence="1">Homodecamer; pentamer of dimers.</text>
</comment>
<comment type="subcellular location">
    <subcellularLocation>
        <location evidence="1">Cytoplasm</location>
    </subcellularLocation>
</comment>
<comment type="similarity">
    <text evidence="1">Belongs to the PanB family.</text>
</comment>
<organism>
    <name type="scientific">Thermotoga neapolitana (strain ATCC 49049 / DSM 4359 / NBRC 107923 / NS-E)</name>
    <dbReference type="NCBI Taxonomy" id="309803"/>
    <lineage>
        <taxon>Bacteria</taxon>
        <taxon>Thermotogati</taxon>
        <taxon>Thermotogota</taxon>
        <taxon>Thermotogae</taxon>
        <taxon>Thermotogales</taxon>
        <taxon>Thermotogaceae</taxon>
        <taxon>Thermotoga</taxon>
    </lineage>
</organism>
<protein>
    <recommendedName>
        <fullName evidence="1">3-methyl-2-oxobutanoate hydroxymethyltransferase</fullName>
        <ecNumber evidence="1">2.1.2.11</ecNumber>
    </recommendedName>
    <alternativeName>
        <fullName evidence="1">Ketopantoate hydroxymethyltransferase</fullName>
        <shortName evidence="1">KPHMT</shortName>
    </alternativeName>
</protein>
<sequence>MNVEKLKKMKGKEKIVMVTAYDAPSARIAQDAGIDIILVGDSLGNNVLGYENTIPVTMEEMLIHVAAVRRGAPKAFVVADMPFLSYQPSLEKAIENAGRFLKVGANAVKIEGGEEFGEVVQRLVESGIPVMGHIGLTPQFVNRFGGYRVQGKTEKSREYLLRSARELEKRGAFAIVLEMVVEEVAKEITEGISIPTIGIGSGRFCDGQVLVWHDLLGLNPDFAPRFSKRYANLYETILKALQEFKKEVKEGIFPSEEHVFTDKSQGGVSS</sequence>
<reference key="1">
    <citation type="submission" date="2007-11" db="EMBL/GenBank/DDBJ databases">
        <title>The genome sequence of the hyperthermophilic bacterium Thermotoga neapolitana.</title>
        <authorList>
            <person name="Lim S.K."/>
            <person name="Kim J.S."/>
            <person name="Cha S.H."/>
            <person name="Park B.C."/>
            <person name="Lee D.S."/>
            <person name="Tae H.S."/>
            <person name="Kim S.-J."/>
            <person name="Kim J.J."/>
            <person name="Park K.J."/>
            <person name="Lee S.Y."/>
        </authorList>
    </citation>
    <scope>NUCLEOTIDE SEQUENCE [LARGE SCALE GENOMIC DNA]</scope>
    <source>
        <strain>ATCC 49049 / DSM 4359 / NBRC 107923 / NS-E</strain>
    </source>
</reference>
<accession>B9K819</accession>
<proteinExistence type="inferred from homology"/>
<feature type="chain" id="PRO_1000123391" description="3-methyl-2-oxobutanoate hydroxymethyltransferase">
    <location>
        <begin position="1"/>
        <end position="270"/>
    </location>
</feature>
<feature type="active site" description="Proton acceptor" evidence="1">
    <location>
        <position position="178"/>
    </location>
</feature>
<feature type="binding site" evidence="1">
    <location>
        <begin position="41"/>
        <end position="42"/>
    </location>
    <ligand>
        <name>3-methyl-2-oxobutanoate</name>
        <dbReference type="ChEBI" id="CHEBI:11851"/>
    </ligand>
</feature>
<feature type="binding site" evidence="1">
    <location>
        <position position="41"/>
    </location>
    <ligand>
        <name>Mg(2+)</name>
        <dbReference type="ChEBI" id="CHEBI:18420"/>
    </ligand>
</feature>
<feature type="binding site" evidence="1">
    <location>
        <position position="80"/>
    </location>
    <ligand>
        <name>3-methyl-2-oxobutanoate</name>
        <dbReference type="ChEBI" id="CHEBI:11851"/>
    </ligand>
</feature>
<feature type="binding site" evidence="1">
    <location>
        <position position="80"/>
    </location>
    <ligand>
        <name>Mg(2+)</name>
        <dbReference type="ChEBI" id="CHEBI:18420"/>
    </ligand>
</feature>
<feature type="binding site" evidence="1">
    <location>
        <position position="109"/>
    </location>
    <ligand>
        <name>3-methyl-2-oxobutanoate</name>
        <dbReference type="ChEBI" id="CHEBI:11851"/>
    </ligand>
</feature>
<feature type="binding site" evidence="1">
    <location>
        <position position="111"/>
    </location>
    <ligand>
        <name>Mg(2+)</name>
        <dbReference type="ChEBI" id="CHEBI:18420"/>
    </ligand>
</feature>
<keyword id="KW-0963">Cytoplasm</keyword>
<keyword id="KW-0460">Magnesium</keyword>
<keyword id="KW-0479">Metal-binding</keyword>
<keyword id="KW-0566">Pantothenate biosynthesis</keyword>
<keyword id="KW-0808">Transferase</keyword>
<dbReference type="EC" id="2.1.2.11" evidence="1"/>
<dbReference type="EMBL" id="CP000916">
    <property type="protein sequence ID" value="ACM23101.1"/>
    <property type="molecule type" value="Genomic_DNA"/>
</dbReference>
<dbReference type="RefSeq" id="WP_015919418.1">
    <property type="nucleotide sequence ID" value="NC_011978.1"/>
</dbReference>
<dbReference type="SMR" id="B9K819"/>
<dbReference type="STRING" id="309803.CTN_0926"/>
<dbReference type="KEGG" id="tna:CTN_0926"/>
<dbReference type="eggNOG" id="COG0413">
    <property type="taxonomic scope" value="Bacteria"/>
</dbReference>
<dbReference type="HOGENOM" id="CLU_036645_1_0_0"/>
<dbReference type="UniPathway" id="UPA00028">
    <property type="reaction ID" value="UER00003"/>
</dbReference>
<dbReference type="Proteomes" id="UP000000445">
    <property type="component" value="Chromosome"/>
</dbReference>
<dbReference type="GO" id="GO:0005737">
    <property type="term" value="C:cytoplasm"/>
    <property type="evidence" value="ECO:0007669"/>
    <property type="project" value="UniProtKB-SubCell"/>
</dbReference>
<dbReference type="GO" id="GO:0003864">
    <property type="term" value="F:3-methyl-2-oxobutanoate hydroxymethyltransferase activity"/>
    <property type="evidence" value="ECO:0007669"/>
    <property type="project" value="UniProtKB-UniRule"/>
</dbReference>
<dbReference type="GO" id="GO:0000287">
    <property type="term" value="F:magnesium ion binding"/>
    <property type="evidence" value="ECO:0007669"/>
    <property type="project" value="TreeGrafter"/>
</dbReference>
<dbReference type="GO" id="GO:0015940">
    <property type="term" value="P:pantothenate biosynthetic process"/>
    <property type="evidence" value="ECO:0007669"/>
    <property type="project" value="UniProtKB-UniRule"/>
</dbReference>
<dbReference type="CDD" id="cd06557">
    <property type="entry name" value="KPHMT-like"/>
    <property type="match status" value="1"/>
</dbReference>
<dbReference type="FunFam" id="3.20.20.60:FF:000003">
    <property type="entry name" value="3-methyl-2-oxobutanoate hydroxymethyltransferase"/>
    <property type="match status" value="1"/>
</dbReference>
<dbReference type="Gene3D" id="3.20.20.60">
    <property type="entry name" value="Phosphoenolpyruvate-binding domains"/>
    <property type="match status" value="1"/>
</dbReference>
<dbReference type="HAMAP" id="MF_00156">
    <property type="entry name" value="PanB"/>
    <property type="match status" value="1"/>
</dbReference>
<dbReference type="InterPro" id="IPR003700">
    <property type="entry name" value="Pantoate_hydroxy_MeTrfase"/>
</dbReference>
<dbReference type="InterPro" id="IPR015813">
    <property type="entry name" value="Pyrv/PenolPyrv_kinase-like_dom"/>
</dbReference>
<dbReference type="InterPro" id="IPR040442">
    <property type="entry name" value="Pyrv_kinase-like_dom_sf"/>
</dbReference>
<dbReference type="NCBIfam" id="TIGR00222">
    <property type="entry name" value="panB"/>
    <property type="match status" value="1"/>
</dbReference>
<dbReference type="NCBIfam" id="NF001452">
    <property type="entry name" value="PRK00311.1"/>
    <property type="match status" value="1"/>
</dbReference>
<dbReference type="PANTHER" id="PTHR20881">
    <property type="entry name" value="3-METHYL-2-OXOBUTANOATE HYDROXYMETHYLTRANSFERASE"/>
    <property type="match status" value="1"/>
</dbReference>
<dbReference type="PANTHER" id="PTHR20881:SF0">
    <property type="entry name" value="3-METHYL-2-OXOBUTANOATE HYDROXYMETHYLTRANSFERASE"/>
    <property type="match status" value="1"/>
</dbReference>
<dbReference type="Pfam" id="PF02548">
    <property type="entry name" value="Pantoate_transf"/>
    <property type="match status" value="1"/>
</dbReference>
<dbReference type="PIRSF" id="PIRSF000388">
    <property type="entry name" value="Pantoate_hydroxy_MeTrfase"/>
    <property type="match status" value="1"/>
</dbReference>
<dbReference type="SUPFAM" id="SSF51621">
    <property type="entry name" value="Phosphoenolpyruvate/pyruvate domain"/>
    <property type="match status" value="1"/>
</dbReference>
<evidence type="ECO:0000255" key="1">
    <source>
        <dbReference type="HAMAP-Rule" id="MF_00156"/>
    </source>
</evidence>
<name>PANB_THENN</name>